<dbReference type="EC" id="2.5.1.141" evidence="1"/>
<dbReference type="EMBL" id="BX936398">
    <property type="protein sequence ID" value="CAH20188.1"/>
    <property type="molecule type" value="Genomic_DNA"/>
</dbReference>
<dbReference type="SMR" id="Q66DU5"/>
<dbReference type="KEGG" id="yps:YPTB0948"/>
<dbReference type="UniPathway" id="UPA00834">
    <property type="reaction ID" value="UER00712"/>
</dbReference>
<dbReference type="Proteomes" id="UP000001011">
    <property type="component" value="Chromosome"/>
</dbReference>
<dbReference type="GO" id="GO:0005886">
    <property type="term" value="C:plasma membrane"/>
    <property type="evidence" value="ECO:0007669"/>
    <property type="project" value="UniProtKB-SubCell"/>
</dbReference>
<dbReference type="GO" id="GO:0008495">
    <property type="term" value="F:protoheme IX farnesyltransferase activity"/>
    <property type="evidence" value="ECO:0007669"/>
    <property type="project" value="UniProtKB-UniRule"/>
</dbReference>
<dbReference type="GO" id="GO:0048034">
    <property type="term" value="P:heme O biosynthetic process"/>
    <property type="evidence" value="ECO:0007669"/>
    <property type="project" value="UniProtKB-UniRule"/>
</dbReference>
<dbReference type="CDD" id="cd13957">
    <property type="entry name" value="PT_UbiA_Cox10"/>
    <property type="match status" value="1"/>
</dbReference>
<dbReference type="FunFam" id="1.10.357.140:FF:000001">
    <property type="entry name" value="Protoheme IX farnesyltransferase"/>
    <property type="match status" value="1"/>
</dbReference>
<dbReference type="Gene3D" id="1.10.357.140">
    <property type="entry name" value="UbiA prenyltransferase"/>
    <property type="match status" value="1"/>
</dbReference>
<dbReference type="HAMAP" id="MF_00154">
    <property type="entry name" value="CyoE_CtaB"/>
    <property type="match status" value="1"/>
</dbReference>
<dbReference type="InterPro" id="IPR006369">
    <property type="entry name" value="Protohaem_IX_farnesylTrfase"/>
</dbReference>
<dbReference type="InterPro" id="IPR000537">
    <property type="entry name" value="UbiA_prenyltransferase"/>
</dbReference>
<dbReference type="InterPro" id="IPR030470">
    <property type="entry name" value="UbiA_prenylTrfase_CS"/>
</dbReference>
<dbReference type="InterPro" id="IPR044878">
    <property type="entry name" value="UbiA_sf"/>
</dbReference>
<dbReference type="NCBIfam" id="TIGR01473">
    <property type="entry name" value="cyoE_ctaB"/>
    <property type="match status" value="1"/>
</dbReference>
<dbReference type="NCBIfam" id="NF003348">
    <property type="entry name" value="PRK04375.1-1"/>
    <property type="match status" value="1"/>
</dbReference>
<dbReference type="PANTHER" id="PTHR43448">
    <property type="entry name" value="PROTOHEME IX FARNESYLTRANSFERASE, MITOCHONDRIAL"/>
    <property type="match status" value="1"/>
</dbReference>
<dbReference type="PANTHER" id="PTHR43448:SF2">
    <property type="entry name" value="PROTOHEME IX FARNESYLTRANSFERASE, MITOCHONDRIAL"/>
    <property type="match status" value="1"/>
</dbReference>
<dbReference type="Pfam" id="PF01040">
    <property type="entry name" value="UbiA"/>
    <property type="match status" value="1"/>
</dbReference>
<dbReference type="PROSITE" id="PS00943">
    <property type="entry name" value="UBIA"/>
    <property type="match status" value="1"/>
</dbReference>
<evidence type="ECO:0000255" key="1">
    <source>
        <dbReference type="HAMAP-Rule" id="MF_00154"/>
    </source>
</evidence>
<protein>
    <recommendedName>
        <fullName evidence="1">Protoheme IX farnesyltransferase</fullName>
        <ecNumber evidence="1">2.5.1.141</ecNumber>
    </recommendedName>
    <alternativeName>
        <fullName evidence="1">Heme B farnesyltransferase</fullName>
    </alternativeName>
    <alternativeName>
        <fullName evidence="1">Heme O synthase</fullName>
    </alternativeName>
</protein>
<organism>
    <name type="scientific">Yersinia pseudotuberculosis serotype I (strain IP32953)</name>
    <dbReference type="NCBI Taxonomy" id="273123"/>
    <lineage>
        <taxon>Bacteria</taxon>
        <taxon>Pseudomonadati</taxon>
        <taxon>Pseudomonadota</taxon>
        <taxon>Gammaproteobacteria</taxon>
        <taxon>Enterobacterales</taxon>
        <taxon>Yersiniaceae</taxon>
        <taxon>Yersinia</taxon>
    </lineage>
</organism>
<comment type="function">
    <text evidence="1">Converts heme B (protoheme IX) to heme O by substitution of the vinyl group on carbon 2 of heme B porphyrin ring with a hydroxyethyl farnesyl side group.</text>
</comment>
<comment type="catalytic activity">
    <reaction evidence="1">
        <text>heme b + (2E,6E)-farnesyl diphosphate + H2O = Fe(II)-heme o + diphosphate</text>
        <dbReference type="Rhea" id="RHEA:28070"/>
        <dbReference type="ChEBI" id="CHEBI:15377"/>
        <dbReference type="ChEBI" id="CHEBI:33019"/>
        <dbReference type="ChEBI" id="CHEBI:60344"/>
        <dbReference type="ChEBI" id="CHEBI:60530"/>
        <dbReference type="ChEBI" id="CHEBI:175763"/>
        <dbReference type="EC" id="2.5.1.141"/>
    </reaction>
</comment>
<comment type="pathway">
    <text evidence="1">Porphyrin-containing compound metabolism; heme O biosynthesis; heme O from protoheme: step 1/1.</text>
</comment>
<comment type="subcellular location">
    <subcellularLocation>
        <location evidence="1">Cell inner membrane</location>
        <topology evidence="1">Multi-pass membrane protein</topology>
    </subcellularLocation>
</comment>
<comment type="miscellaneous">
    <text evidence="1">Carbon 2 of the heme B porphyrin ring is defined according to the Fischer nomenclature.</text>
</comment>
<comment type="similarity">
    <text evidence="1">Belongs to the UbiA prenyltransferase family. Protoheme IX farnesyltransferase subfamily.</text>
</comment>
<keyword id="KW-0997">Cell inner membrane</keyword>
<keyword id="KW-1003">Cell membrane</keyword>
<keyword id="KW-0350">Heme biosynthesis</keyword>
<keyword id="KW-0472">Membrane</keyword>
<keyword id="KW-0808">Transferase</keyword>
<keyword id="KW-0812">Transmembrane</keyword>
<keyword id="KW-1133">Transmembrane helix</keyword>
<name>CYOE_YERPS</name>
<feature type="chain" id="PRO_0000326982" description="Protoheme IX farnesyltransferase">
    <location>
        <begin position="1"/>
        <end position="296"/>
    </location>
</feature>
<feature type="transmembrane region" description="Helical" evidence="1">
    <location>
        <begin position="9"/>
        <end position="29"/>
    </location>
</feature>
<feature type="transmembrane region" description="Helical" evidence="1">
    <location>
        <begin position="36"/>
        <end position="56"/>
    </location>
</feature>
<feature type="transmembrane region" description="Helical" evidence="1">
    <location>
        <begin position="75"/>
        <end position="95"/>
    </location>
</feature>
<feature type="transmembrane region" description="Helical" evidence="1">
    <location>
        <begin position="99"/>
        <end position="119"/>
    </location>
</feature>
<feature type="transmembrane region" description="Helical" evidence="1">
    <location>
        <begin position="133"/>
        <end position="153"/>
    </location>
</feature>
<feature type="transmembrane region" description="Helical" evidence="1">
    <location>
        <begin position="163"/>
        <end position="183"/>
    </location>
</feature>
<feature type="transmembrane region" description="Helical" evidence="1">
    <location>
        <begin position="209"/>
        <end position="229"/>
    </location>
</feature>
<feature type="transmembrane region" description="Helical" evidence="1">
    <location>
        <begin position="234"/>
        <end position="254"/>
    </location>
</feature>
<feature type="transmembrane region" description="Helical" evidence="1">
    <location>
        <begin position="265"/>
        <end position="285"/>
    </location>
</feature>
<gene>
    <name evidence="1" type="primary">cyoE</name>
    <name type="ordered locus">YPTB0948</name>
</gene>
<reference key="1">
    <citation type="journal article" date="2004" name="Proc. Natl. Acad. Sci. U.S.A.">
        <title>Insights into the evolution of Yersinia pestis through whole-genome comparison with Yersinia pseudotuberculosis.</title>
        <authorList>
            <person name="Chain P.S.G."/>
            <person name="Carniel E."/>
            <person name="Larimer F.W."/>
            <person name="Lamerdin J."/>
            <person name="Stoutland P.O."/>
            <person name="Regala W.M."/>
            <person name="Georgescu A.M."/>
            <person name="Vergez L.M."/>
            <person name="Land M.L."/>
            <person name="Motin V.L."/>
            <person name="Brubaker R.R."/>
            <person name="Fowler J."/>
            <person name="Hinnebusch J."/>
            <person name="Marceau M."/>
            <person name="Medigue C."/>
            <person name="Simonet M."/>
            <person name="Chenal-Francisque V."/>
            <person name="Souza B."/>
            <person name="Dacheux D."/>
            <person name="Elliott J.M."/>
            <person name="Derbise A."/>
            <person name="Hauser L.J."/>
            <person name="Garcia E."/>
        </authorList>
    </citation>
    <scope>NUCLEOTIDE SEQUENCE [LARGE SCALE GENOMIC DNA]</scope>
    <source>
        <strain>IP32953</strain>
    </source>
</reference>
<proteinExistence type="inferred from homology"/>
<sequence>MMIKQYLQVTKPGIIFGNLISVIGGFLLASKGDIDYPLFLSTLLGVSLVVASGCVFNNYIDRDIDKIMERTKNRVLVKGLIDPKVSLIYASVLGIAGMLLLYVAANALAMMLAVIGFVIYVGVYSLYMKRKSVYGTLIGSLSGAAPPVIGYCAVTGQFDTGALILLLIFSLWQMPHSYAIAIFRFKDYQAANIPVLPVIKGISVTKNHITLYILAFMVATLMLTLSGYAGYKYLVVAAAVSVWWLGMALRGYKATNDSVWARKLFVFSIIAITSLSVMMSVDFNVHSSAVLLTYAG</sequence>
<accession>Q66DU5</accession>